<name>ILVD_BACAC</name>
<protein>
    <recommendedName>
        <fullName evidence="1">Dihydroxy-acid dehydratase</fullName>
        <shortName evidence="1">DAD</shortName>
        <ecNumber evidence="1">4.2.1.9</ecNumber>
    </recommendedName>
</protein>
<reference key="1">
    <citation type="submission" date="2008-10" db="EMBL/GenBank/DDBJ databases">
        <title>Genome sequence of Bacillus anthracis str. CDC 684.</title>
        <authorList>
            <person name="Dodson R.J."/>
            <person name="Munk A.C."/>
            <person name="Brettin T."/>
            <person name="Bruce D."/>
            <person name="Detter C."/>
            <person name="Tapia R."/>
            <person name="Han C."/>
            <person name="Sutton G."/>
            <person name="Sims D."/>
        </authorList>
    </citation>
    <scope>NUCLEOTIDE SEQUENCE [LARGE SCALE GENOMIC DNA]</scope>
    <source>
        <strain>CDC 684 / NRRL 3495</strain>
    </source>
</reference>
<sequence length="557" mass="59934">MRSDMIKKGFDKAPHRSLLKATGLKDEDFDKPFIAICNSFIEIIPGHKHLNEFGKLVKEAVRAAGMVPFEFNTIGVDDGIAMGHIGMRYSLPSREIIADSVETVVNAHWFDGMICIPNCDKITPGMMMAALRINIPTVFVSGGPMAAGKTSKGDVVDLSSVFEGVGAYQSGKISEEELKDIEDHGCPSCGSCSGMFTANSMNCLCEVLGLALPGNGSILAIDPRREELIKQAAEKLKILIERDIKPRDIVTEEAIDDAFALDMAMGGSTNTVLHTLALAQEAGLDYDMNRIDAVSRRVPHLCKVSPASNWHMEDIDRAGGISAILKEMSRKEGVLHLDRITATGQTLRENIAHAEIKDKEVIHSLENPHSEEGGLRILKGNLAKDGAVIKSGATEVKRFEGPCVIFNSQDEALAGIMLGKVKKGDVVVIRYEGPRGGPGMPEMLAPTSAIAGMGLGADVALLTDGRFSGASRGISVGHISPEAAAGGTIALLEQGDIVCIDVEERLLEVRVSDEELGKRKKEWKRPEPKVKTGWLGRYAQMVTSANTGAVLKIPNFD</sequence>
<proteinExistence type="inferred from homology"/>
<feature type="chain" id="PRO_1000116498" description="Dihydroxy-acid dehydratase">
    <location>
        <begin position="1"/>
        <end position="557"/>
    </location>
</feature>
<feature type="active site" description="Proton acceptor" evidence="1">
    <location>
        <position position="468"/>
    </location>
</feature>
<feature type="binding site" evidence="1">
    <location>
        <position position="78"/>
    </location>
    <ligand>
        <name>Mg(2+)</name>
        <dbReference type="ChEBI" id="CHEBI:18420"/>
    </ligand>
</feature>
<feature type="binding site" evidence="1">
    <location>
        <position position="119"/>
    </location>
    <ligand>
        <name>[2Fe-2S] cluster</name>
        <dbReference type="ChEBI" id="CHEBI:190135"/>
    </ligand>
</feature>
<feature type="binding site" evidence="1">
    <location>
        <position position="120"/>
    </location>
    <ligand>
        <name>Mg(2+)</name>
        <dbReference type="ChEBI" id="CHEBI:18420"/>
    </ligand>
</feature>
<feature type="binding site" description="via carbamate group" evidence="1">
    <location>
        <position position="121"/>
    </location>
    <ligand>
        <name>Mg(2+)</name>
        <dbReference type="ChEBI" id="CHEBI:18420"/>
    </ligand>
</feature>
<feature type="binding site" evidence="1">
    <location>
        <position position="192"/>
    </location>
    <ligand>
        <name>[2Fe-2S] cluster</name>
        <dbReference type="ChEBI" id="CHEBI:190135"/>
    </ligand>
</feature>
<feature type="binding site" evidence="1">
    <location>
        <position position="442"/>
    </location>
    <ligand>
        <name>Mg(2+)</name>
        <dbReference type="ChEBI" id="CHEBI:18420"/>
    </ligand>
</feature>
<feature type="modified residue" description="N6-carboxylysine" evidence="1">
    <location>
        <position position="121"/>
    </location>
</feature>
<organism>
    <name type="scientific">Bacillus anthracis (strain CDC 684 / NRRL 3495)</name>
    <dbReference type="NCBI Taxonomy" id="568206"/>
    <lineage>
        <taxon>Bacteria</taxon>
        <taxon>Bacillati</taxon>
        <taxon>Bacillota</taxon>
        <taxon>Bacilli</taxon>
        <taxon>Bacillales</taxon>
        <taxon>Bacillaceae</taxon>
        <taxon>Bacillus</taxon>
        <taxon>Bacillus cereus group</taxon>
    </lineage>
</organism>
<evidence type="ECO:0000255" key="1">
    <source>
        <dbReference type="HAMAP-Rule" id="MF_00012"/>
    </source>
</evidence>
<accession>C3L6P6</accession>
<keyword id="KW-0001">2Fe-2S</keyword>
<keyword id="KW-0028">Amino-acid biosynthesis</keyword>
<keyword id="KW-0100">Branched-chain amino acid biosynthesis</keyword>
<keyword id="KW-0408">Iron</keyword>
<keyword id="KW-0411">Iron-sulfur</keyword>
<keyword id="KW-0456">Lyase</keyword>
<keyword id="KW-0460">Magnesium</keyword>
<keyword id="KW-0479">Metal-binding</keyword>
<dbReference type="EC" id="4.2.1.9" evidence="1"/>
<dbReference type="EMBL" id="CP001215">
    <property type="protein sequence ID" value="ACP13002.1"/>
    <property type="molecule type" value="Genomic_DNA"/>
</dbReference>
<dbReference type="RefSeq" id="WP_001255799.1">
    <property type="nucleotide sequence ID" value="NC_012581.1"/>
</dbReference>
<dbReference type="SMR" id="C3L6P6"/>
<dbReference type="GeneID" id="45021788"/>
<dbReference type="KEGG" id="bah:BAMEG_2739"/>
<dbReference type="HOGENOM" id="CLU_014271_4_2_9"/>
<dbReference type="UniPathway" id="UPA00047">
    <property type="reaction ID" value="UER00057"/>
</dbReference>
<dbReference type="UniPathway" id="UPA00049">
    <property type="reaction ID" value="UER00061"/>
</dbReference>
<dbReference type="GO" id="GO:0005829">
    <property type="term" value="C:cytosol"/>
    <property type="evidence" value="ECO:0007669"/>
    <property type="project" value="TreeGrafter"/>
</dbReference>
<dbReference type="GO" id="GO:0051537">
    <property type="term" value="F:2 iron, 2 sulfur cluster binding"/>
    <property type="evidence" value="ECO:0007669"/>
    <property type="project" value="UniProtKB-UniRule"/>
</dbReference>
<dbReference type="GO" id="GO:0004160">
    <property type="term" value="F:dihydroxy-acid dehydratase activity"/>
    <property type="evidence" value="ECO:0007669"/>
    <property type="project" value="UniProtKB-UniRule"/>
</dbReference>
<dbReference type="GO" id="GO:0000287">
    <property type="term" value="F:magnesium ion binding"/>
    <property type="evidence" value="ECO:0007669"/>
    <property type="project" value="UniProtKB-UniRule"/>
</dbReference>
<dbReference type="GO" id="GO:0009097">
    <property type="term" value="P:isoleucine biosynthetic process"/>
    <property type="evidence" value="ECO:0007669"/>
    <property type="project" value="UniProtKB-UniRule"/>
</dbReference>
<dbReference type="GO" id="GO:0009099">
    <property type="term" value="P:L-valine biosynthetic process"/>
    <property type="evidence" value="ECO:0007669"/>
    <property type="project" value="UniProtKB-UniRule"/>
</dbReference>
<dbReference type="FunFam" id="3.50.30.80:FF:000001">
    <property type="entry name" value="Dihydroxy-acid dehydratase"/>
    <property type="match status" value="1"/>
</dbReference>
<dbReference type="Gene3D" id="3.50.30.80">
    <property type="entry name" value="IlvD/EDD C-terminal domain-like"/>
    <property type="match status" value="1"/>
</dbReference>
<dbReference type="HAMAP" id="MF_00012">
    <property type="entry name" value="IlvD"/>
    <property type="match status" value="1"/>
</dbReference>
<dbReference type="InterPro" id="IPR042096">
    <property type="entry name" value="Dihydro-acid_dehy_C"/>
</dbReference>
<dbReference type="InterPro" id="IPR004404">
    <property type="entry name" value="DihydroxyA_deHydtase"/>
</dbReference>
<dbReference type="InterPro" id="IPR020558">
    <property type="entry name" value="DiOHA_6PGluconate_deHydtase_CS"/>
</dbReference>
<dbReference type="InterPro" id="IPR056740">
    <property type="entry name" value="ILV_EDD_C"/>
</dbReference>
<dbReference type="InterPro" id="IPR000581">
    <property type="entry name" value="ILV_EDD_N"/>
</dbReference>
<dbReference type="InterPro" id="IPR037237">
    <property type="entry name" value="IlvD/EDD_N"/>
</dbReference>
<dbReference type="NCBIfam" id="TIGR00110">
    <property type="entry name" value="ilvD"/>
    <property type="match status" value="1"/>
</dbReference>
<dbReference type="NCBIfam" id="NF002068">
    <property type="entry name" value="PRK00911.1"/>
    <property type="match status" value="1"/>
</dbReference>
<dbReference type="PANTHER" id="PTHR43661">
    <property type="entry name" value="D-XYLONATE DEHYDRATASE"/>
    <property type="match status" value="1"/>
</dbReference>
<dbReference type="PANTHER" id="PTHR43661:SF3">
    <property type="entry name" value="D-XYLONATE DEHYDRATASE YAGF-RELATED"/>
    <property type="match status" value="1"/>
</dbReference>
<dbReference type="Pfam" id="PF24877">
    <property type="entry name" value="ILV_EDD_C"/>
    <property type="match status" value="1"/>
</dbReference>
<dbReference type="Pfam" id="PF00920">
    <property type="entry name" value="ILVD_EDD_N"/>
    <property type="match status" value="1"/>
</dbReference>
<dbReference type="SUPFAM" id="SSF143975">
    <property type="entry name" value="IlvD/EDD N-terminal domain-like"/>
    <property type="match status" value="1"/>
</dbReference>
<dbReference type="SUPFAM" id="SSF52016">
    <property type="entry name" value="LeuD/IlvD-like"/>
    <property type="match status" value="1"/>
</dbReference>
<dbReference type="PROSITE" id="PS00886">
    <property type="entry name" value="ILVD_EDD_1"/>
    <property type="match status" value="1"/>
</dbReference>
<dbReference type="PROSITE" id="PS00887">
    <property type="entry name" value="ILVD_EDD_2"/>
    <property type="match status" value="1"/>
</dbReference>
<gene>
    <name evidence="1" type="primary">ilvD</name>
    <name type="ordered locus">BAMEG_2739</name>
</gene>
<comment type="function">
    <text evidence="1">Functions in the biosynthesis of branched-chain amino acids. Catalyzes the dehydration of (2R,3R)-2,3-dihydroxy-3-methylpentanoate (2,3-dihydroxy-3-methylvalerate) into 2-oxo-3-methylpentanoate (2-oxo-3-methylvalerate) and of (2R)-2,3-dihydroxy-3-methylbutanoate (2,3-dihydroxyisovalerate) into 2-oxo-3-methylbutanoate (2-oxoisovalerate), the penultimate precursor to L-isoleucine and L-valine, respectively.</text>
</comment>
<comment type="catalytic activity">
    <reaction evidence="1">
        <text>(2R)-2,3-dihydroxy-3-methylbutanoate = 3-methyl-2-oxobutanoate + H2O</text>
        <dbReference type="Rhea" id="RHEA:24809"/>
        <dbReference type="ChEBI" id="CHEBI:11851"/>
        <dbReference type="ChEBI" id="CHEBI:15377"/>
        <dbReference type="ChEBI" id="CHEBI:49072"/>
        <dbReference type="EC" id="4.2.1.9"/>
    </reaction>
    <physiologicalReaction direction="left-to-right" evidence="1">
        <dbReference type="Rhea" id="RHEA:24810"/>
    </physiologicalReaction>
</comment>
<comment type="catalytic activity">
    <reaction evidence="1">
        <text>(2R,3R)-2,3-dihydroxy-3-methylpentanoate = (S)-3-methyl-2-oxopentanoate + H2O</text>
        <dbReference type="Rhea" id="RHEA:27694"/>
        <dbReference type="ChEBI" id="CHEBI:15377"/>
        <dbReference type="ChEBI" id="CHEBI:35146"/>
        <dbReference type="ChEBI" id="CHEBI:49258"/>
        <dbReference type="EC" id="4.2.1.9"/>
    </reaction>
    <physiologicalReaction direction="left-to-right" evidence="1">
        <dbReference type="Rhea" id="RHEA:27695"/>
    </physiologicalReaction>
</comment>
<comment type="cofactor">
    <cofactor evidence="1">
        <name>[2Fe-2S] cluster</name>
        <dbReference type="ChEBI" id="CHEBI:190135"/>
    </cofactor>
    <text evidence="1">Binds 1 [2Fe-2S] cluster per subunit. This cluster acts as a Lewis acid cofactor.</text>
</comment>
<comment type="cofactor">
    <cofactor evidence="1">
        <name>Mg(2+)</name>
        <dbReference type="ChEBI" id="CHEBI:18420"/>
    </cofactor>
</comment>
<comment type="pathway">
    <text evidence="1">Amino-acid biosynthesis; L-isoleucine biosynthesis; L-isoleucine from 2-oxobutanoate: step 3/4.</text>
</comment>
<comment type="pathway">
    <text evidence="1">Amino-acid biosynthesis; L-valine biosynthesis; L-valine from pyruvate: step 3/4.</text>
</comment>
<comment type="subunit">
    <text evidence="1">Homodimer.</text>
</comment>
<comment type="similarity">
    <text evidence="1">Belongs to the IlvD/Edd family.</text>
</comment>